<evidence type="ECO:0000250" key="1">
    <source>
        <dbReference type="UniProtKB" id="P56761"/>
    </source>
</evidence>
<evidence type="ECO:0000255" key="2">
    <source>
        <dbReference type="HAMAP-Rule" id="MF_01383"/>
    </source>
</evidence>
<organism>
    <name type="scientific">Cycas taitungensis</name>
    <name type="common">Prince sago</name>
    <name type="synonym">Cycas taiwaniana</name>
    <dbReference type="NCBI Taxonomy" id="54799"/>
    <lineage>
        <taxon>Eukaryota</taxon>
        <taxon>Viridiplantae</taxon>
        <taxon>Streptophyta</taxon>
        <taxon>Embryophyta</taxon>
        <taxon>Tracheophyta</taxon>
        <taxon>Spermatophyta</taxon>
        <taxon>Cycadidae</taxon>
        <taxon>Cycadales</taxon>
        <taxon>Cycadaceae</taxon>
        <taxon>Cycas</taxon>
    </lineage>
</organism>
<reference key="1">
    <citation type="journal article" date="2007" name="Mol. Biol. Evol.">
        <title>Chloroplast genome (cpDNA) of Cycas taitungensis and 56 cp protein-coding genes of Gnetum parvifolium: insights into cpDNA evolution and phylogeny of extant seed plants.</title>
        <authorList>
            <person name="Wu C.-S."/>
            <person name="Wang Y.-N."/>
            <person name="Liu S.-M."/>
            <person name="Chaw S.-M."/>
        </authorList>
    </citation>
    <scope>NUCLEOTIDE SEQUENCE [LARGE SCALE GENOMIC DNA]</scope>
</reference>
<name>PSBD_CYCTA</name>
<feature type="initiator methionine" description="Removed" evidence="1">
    <location>
        <position position="1"/>
    </location>
</feature>
<feature type="chain" id="PRO_0000359646" description="Photosystem II D2 protein">
    <location>
        <begin position="2"/>
        <end position="353"/>
    </location>
</feature>
<feature type="transmembrane region" description="Helical" evidence="2">
    <location>
        <begin position="41"/>
        <end position="61"/>
    </location>
</feature>
<feature type="transmembrane region" description="Helical" evidence="2">
    <location>
        <begin position="125"/>
        <end position="141"/>
    </location>
</feature>
<feature type="transmembrane region" description="Helical" evidence="2">
    <location>
        <begin position="153"/>
        <end position="166"/>
    </location>
</feature>
<feature type="transmembrane region" description="Helical" evidence="2">
    <location>
        <begin position="208"/>
        <end position="228"/>
    </location>
</feature>
<feature type="transmembrane region" description="Helical" evidence="2">
    <location>
        <begin position="279"/>
        <end position="295"/>
    </location>
</feature>
<feature type="binding site" description="axial binding residue" evidence="2">
    <location>
        <position position="118"/>
    </location>
    <ligand>
        <name>chlorophyll a</name>
        <dbReference type="ChEBI" id="CHEBI:58416"/>
        <label>ChlzD2</label>
    </ligand>
    <ligandPart>
        <name>Mg</name>
        <dbReference type="ChEBI" id="CHEBI:25107"/>
    </ligandPart>
</feature>
<feature type="binding site" evidence="2">
    <location>
        <position position="130"/>
    </location>
    <ligand>
        <name>pheophytin a</name>
        <dbReference type="ChEBI" id="CHEBI:136840"/>
        <label>D2</label>
    </ligand>
</feature>
<feature type="binding site" evidence="2">
    <location>
        <position position="143"/>
    </location>
    <ligand>
        <name>pheophytin a</name>
        <dbReference type="ChEBI" id="CHEBI:136840"/>
        <label>D2</label>
    </ligand>
</feature>
<feature type="binding site" description="axial binding residue" evidence="2">
    <location>
        <position position="198"/>
    </location>
    <ligand>
        <name>chlorophyll a</name>
        <dbReference type="ChEBI" id="CHEBI:58416"/>
        <label>PD2</label>
    </ligand>
    <ligandPart>
        <name>Mg</name>
        <dbReference type="ChEBI" id="CHEBI:25107"/>
    </ligandPart>
</feature>
<feature type="binding site" evidence="2">
    <location>
        <position position="215"/>
    </location>
    <ligand>
        <name>a plastoquinone</name>
        <dbReference type="ChEBI" id="CHEBI:17757"/>
        <label>Q(A)</label>
    </ligand>
</feature>
<feature type="binding site" evidence="2">
    <location>
        <position position="215"/>
    </location>
    <ligand>
        <name>Fe cation</name>
        <dbReference type="ChEBI" id="CHEBI:24875"/>
        <note>ligand shared with heterodimeric partner</note>
    </ligand>
</feature>
<feature type="binding site" evidence="2">
    <location>
        <position position="262"/>
    </location>
    <ligand>
        <name>a plastoquinone</name>
        <dbReference type="ChEBI" id="CHEBI:17757"/>
        <label>Q(A)</label>
    </ligand>
</feature>
<feature type="binding site" evidence="2">
    <location>
        <position position="269"/>
    </location>
    <ligand>
        <name>Fe cation</name>
        <dbReference type="ChEBI" id="CHEBI:24875"/>
        <note>ligand shared with heterodimeric partner</note>
    </ligand>
</feature>
<feature type="modified residue" description="N-acetylthreonine" evidence="1">
    <location>
        <position position="2"/>
    </location>
</feature>
<feature type="modified residue" description="Phosphothreonine" evidence="1">
    <location>
        <position position="2"/>
    </location>
</feature>
<keyword id="KW-0007">Acetylation</keyword>
<keyword id="KW-0148">Chlorophyll</keyword>
<keyword id="KW-0150">Chloroplast</keyword>
<keyword id="KW-0157">Chromophore</keyword>
<keyword id="KW-0249">Electron transport</keyword>
<keyword id="KW-0408">Iron</keyword>
<keyword id="KW-0460">Magnesium</keyword>
<keyword id="KW-0472">Membrane</keyword>
<keyword id="KW-0479">Metal-binding</keyword>
<keyword id="KW-0560">Oxidoreductase</keyword>
<keyword id="KW-0597">Phosphoprotein</keyword>
<keyword id="KW-0602">Photosynthesis</keyword>
<keyword id="KW-0604">Photosystem II</keyword>
<keyword id="KW-0934">Plastid</keyword>
<keyword id="KW-0793">Thylakoid</keyword>
<keyword id="KW-0812">Transmembrane</keyword>
<keyword id="KW-1133">Transmembrane helix</keyword>
<keyword id="KW-0813">Transport</keyword>
<gene>
    <name evidence="2" type="primary">psbD</name>
</gene>
<accession>A6H5G6</accession>
<sequence>MTVALGKSSKEEKNLFDIADDWLRRDRFVFVGWSGLLLFPCAYFALGGWFTGTTFVTSWYTHGLASSYLEGCNFLTAAVSTPANSLAHSLLLLWGPEAQGDFTRWCQLGGLWTFVAFHGGFGLIGFMLRQFELARSVQLRPYNAIAFSAPIAVFVSVFLIYPLGQSGWFFAPSFGVAAIFRFILFFQGFHNWTLNPFHMMGVAGVLGAALLCAIHGATVENTLFEDGDGANTFRAFNPTQAEETYSMVTANRFWSQIFGVAFSNKRWLHFFMLFVPVTGLWMSAIGVVGLALNLRAYDFVSQEIRAAEDPEFETFYTKNILLNEGIRAWMAAQDQPHENLIFPEEVLPRGNAL</sequence>
<geneLocation type="chloroplast"/>
<dbReference type="EC" id="1.10.3.9" evidence="2"/>
<dbReference type="EMBL" id="AP009339">
    <property type="protein sequence ID" value="BAF64932.1"/>
    <property type="molecule type" value="Genomic_DNA"/>
</dbReference>
<dbReference type="RefSeq" id="YP_001312191.1">
    <property type="nucleotide sequence ID" value="NC_009618.1"/>
</dbReference>
<dbReference type="SMR" id="A6H5G6"/>
<dbReference type="GeneID" id="5309516"/>
<dbReference type="GO" id="GO:0009535">
    <property type="term" value="C:chloroplast thylakoid membrane"/>
    <property type="evidence" value="ECO:0007669"/>
    <property type="project" value="UniProtKB-SubCell"/>
</dbReference>
<dbReference type="GO" id="GO:0009523">
    <property type="term" value="C:photosystem II"/>
    <property type="evidence" value="ECO:0007669"/>
    <property type="project" value="UniProtKB-KW"/>
</dbReference>
<dbReference type="GO" id="GO:0016168">
    <property type="term" value="F:chlorophyll binding"/>
    <property type="evidence" value="ECO:0007669"/>
    <property type="project" value="UniProtKB-UniRule"/>
</dbReference>
<dbReference type="GO" id="GO:0045156">
    <property type="term" value="F:electron transporter, transferring electrons within the cyclic electron transport pathway of photosynthesis activity"/>
    <property type="evidence" value="ECO:0007669"/>
    <property type="project" value="InterPro"/>
</dbReference>
<dbReference type="GO" id="GO:0005506">
    <property type="term" value="F:iron ion binding"/>
    <property type="evidence" value="ECO:0007669"/>
    <property type="project" value="UniProtKB-UniRule"/>
</dbReference>
<dbReference type="GO" id="GO:0010242">
    <property type="term" value="F:oxygen evolving activity"/>
    <property type="evidence" value="ECO:0007669"/>
    <property type="project" value="UniProtKB-EC"/>
</dbReference>
<dbReference type="GO" id="GO:0009772">
    <property type="term" value="P:photosynthetic electron transport in photosystem II"/>
    <property type="evidence" value="ECO:0007669"/>
    <property type="project" value="InterPro"/>
</dbReference>
<dbReference type="CDD" id="cd09288">
    <property type="entry name" value="Photosystem-II_D2"/>
    <property type="match status" value="1"/>
</dbReference>
<dbReference type="FunFam" id="1.20.85.10:FF:000001">
    <property type="entry name" value="photosystem II D2 protein-like"/>
    <property type="match status" value="1"/>
</dbReference>
<dbReference type="Gene3D" id="1.20.85.10">
    <property type="entry name" value="Photosystem II protein D1-like"/>
    <property type="match status" value="1"/>
</dbReference>
<dbReference type="HAMAP" id="MF_01383">
    <property type="entry name" value="PSII_PsbD_D2"/>
    <property type="match status" value="1"/>
</dbReference>
<dbReference type="InterPro" id="IPR055266">
    <property type="entry name" value="D1/D2"/>
</dbReference>
<dbReference type="InterPro" id="IPR036854">
    <property type="entry name" value="Photo_II_D1/D2_sf"/>
</dbReference>
<dbReference type="InterPro" id="IPR000484">
    <property type="entry name" value="Photo_RC_L/M"/>
</dbReference>
<dbReference type="InterPro" id="IPR055265">
    <property type="entry name" value="Photo_RC_L/M_CS"/>
</dbReference>
<dbReference type="InterPro" id="IPR005868">
    <property type="entry name" value="PSII_PsbD/D2"/>
</dbReference>
<dbReference type="NCBIfam" id="TIGR01152">
    <property type="entry name" value="psbD"/>
    <property type="match status" value="1"/>
</dbReference>
<dbReference type="PANTHER" id="PTHR33149:SF12">
    <property type="entry name" value="PHOTOSYSTEM II D2 PROTEIN"/>
    <property type="match status" value="1"/>
</dbReference>
<dbReference type="PANTHER" id="PTHR33149">
    <property type="entry name" value="PHOTOSYSTEM II PROTEIN D1"/>
    <property type="match status" value="1"/>
</dbReference>
<dbReference type="Pfam" id="PF00124">
    <property type="entry name" value="Photo_RC"/>
    <property type="match status" value="1"/>
</dbReference>
<dbReference type="PRINTS" id="PR00256">
    <property type="entry name" value="REACTNCENTRE"/>
</dbReference>
<dbReference type="SUPFAM" id="SSF81483">
    <property type="entry name" value="Bacterial photosystem II reaction centre, L and M subunits"/>
    <property type="match status" value="1"/>
</dbReference>
<dbReference type="PROSITE" id="PS00244">
    <property type="entry name" value="REACTION_CENTER"/>
    <property type="match status" value="1"/>
</dbReference>
<proteinExistence type="inferred from homology"/>
<comment type="function">
    <text evidence="2">Photosystem II (PSII) is a light-driven water:plastoquinone oxidoreductase that uses light energy to abstract electrons from H(2)O, generating O(2) and a proton gradient subsequently used for ATP formation. It consists of a core antenna complex that captures photons, and an electron transfer chain that converts photonic excitation into a charge separation. The D1/D2 (PsbA/PsbD) reaction center heterodimer binds P680, the primary electron donor of PSII as well as several subsequent electron acceptors. D2 is needed for assembly of a stable PSII complex.</text>
</comment>
<comment type="catalytic activity">
    <reaction evidence="2">
        <text>2 a plastoquinone + 4 hnu + 2 H2O = 2 a plastoquinol + O2</text>
        <dbReference type="Rhea" id="RHEA:36359"/>
        <dbReference type="Rhea" id="RHEA-COMP:9561"/>
        <dbReference type="Rhea" id="RHEA-COMP:9562"/>
        <dbReference type="ChEBI" id="CHEBI:15377"/>
        <dbReference type="ChEBI" id="CHEBI:15379"/>
        <dbReference type="ChEBI" id="CHEBI:17757"/>
        <dbReference type="ChEBI" id="CHEBI:30212"/>
        <dbReference type="ChEBI" id="CHEBI:62192"/>
        <dbReference type="EC" id="1.10.3.9"/>
    </reaction>
</comment>
<comment type="cofactor">
    <text evidence="2">The D1/D2 heterodimer binds P680, chlorophylls that are the primary electron donor of PSII, and subsequent electron acceptors. It shares a non-heme iron and each subunit binds pheophytin, quinone, additional chlorophylls, carotenoids and lipids. There is also a Cl(-1) ion associated with D1 and D2, which is required for oxygen evolution. The PSII complex binds additional chlorophylls, carotenoids and specific lipids.</text>
</comment>
<comment type="subunit">
    <text evidence="2">PSII is composed of 1 copy each of membrane proteins PsbA, PsbB, PsbC, PsbD, PsbE, PsbF, PsbH, PsbI, PsbJ, PsbK, PsbL, PsbM, PsbT, PsbX, PsbY, PsbZ, Psb30/Ycf12, at least 3 peripheral proteins of the oxygen-evolving complex and a large number of cofactors. It forms dimeric complexes.</text>
</comment>
<comment type="subcellular location">
    <subcellularLocation>
        <location evidence="2">Plastid</location>
        <location evidence="2">Chloroplast thylakoid membrane</location>
        <topology evidence="2">Multi-pass membrane protein</topology>
    </subcellularLocation>
</comment>
<comment type="miscellaneous">
    <text evidence="2">2 of the reaction center chlorophylls (ChlD1 and ChlD2) are entirely coordinated by water.</text>
</comment>
<comment type="similarity">
    <text evidence="2">Belongs to the reaction center PufL/M/PsbA/D family.</text>
</comment>
<protein>
    <recommendedName>
        <fullName evidence="2">Photosystem II D2 protein</fullName>
        <shortName evidence="2">PSII D2 protein</shortName>
        <ecNumber evidence="2">1.10.3.9</ecNumber>
    </recommendedName>
    <alternativeName>
        <fullName evidence="2">Photosystem Q(A) protein</fullName>
    </alternativeName>
</protein>